<name>RL261_ARATH</name>
<comment type="similarity">
    <text evidence="3">Belongs to the universal ribosomal protein uL24 family.</text>
</comment>
<dbReference type="EMBL" id="AL132965">
    <property type="protein sequence ID" value="CAB66929.1"/>
    <property type="molecule type" value="Genomic_DNA"/>
</dbReference>
<dbReference type="EMBL" id="AL132978">
    <property type="status" value="NOT_ANNOTATED_CDS"/>
    <property type="molecule type" value="Genomic_DNA"/>
</dbReference>
<dbReference type="EMBL" id="CP002686">
    <property type="protein sequence ID" value="AEE78605.1"/>
    <property type="molecule type" value="Genomic_DNA"/>
</dbReference>
<dbReference type="EMBL" id="AF370158">
    <property type="protein sequence ID" value="AAK43973.1"/>
    <property type="molecule type" value="mRNA"/>
</dbReference>
<dbReference type="EMBL" id="AY059101">
    <property type="protein sequence ID" value="AAL15207.1"/>
    <property type="molecule type" value="mRNA"/>
</dbReference>
<dbReference type="EMBL" id="BT000681">
    <property type="protein sequence ID" value="AAN31827.1"/>
    <property type="molecule type" value="mRNA"/>
</dbReference>
<dbReference type="EMBL" id="Z18485">
    <property type="protein sequence ID" value="CAA79203.1"/>
    <property type="molecule type" value="mRNA"/>
</dbReference>
<dbReference type="PIR" id="T46057">
    <property type="entry name" value="T46057"/>
</dbReference>
<dbReference type="RefSeq" id="NP_190560.1">
    <property type="nucleotide sequence ID" value="NM_114851.2"/>
</dbReference>
<dbReference type="SMR" id="P51414"/>
<dbReference type="BioGRID" id="9471">
    <property type="interactions" value="176"/>
</dbReference>
<dbReference type="FunCoup" id="P51414">
    <property type="interactions" value="3568"/>
</dbReference>
<dbReference type="IntAct" id="P51414">
    <property type="interactions" value="2"/>
</dbReference>
<dbReference type="STRING" id="3702.P51414"/>
<dbReference type="iPTMnet" id="P51414"/>
<dbReference type="MetOSite" id="P51414"/>
<dbReference type="PaxDb" id="3702-AT3G49910.1"/>
<dbReference type="ProteomicsDB" id="237009"/>
<dbReference type="EnsemblPlants" id="AT3G49910.1">
    <property type="protein sequence ID" value="AT3G49910.1"/>
    <property type="gene ID" value="AT3G49910"/>
</dbReference>
<dbReference type="GeneID" id="824153"/>
<dbReference type="Gramene" id="AT3G49910.1">
    <property type="protein sequence ID" value="AT3G49910.1"/>
    <property type="gene ID" value="AT3G49910"/>
</dbReference>
<dbReference type="KEGG" id="ath:AT3G49910"/>
<dbReference type="Araport" id="AT3G49910"/>
<dbReference type="TAIR" id="AT3G49910"/>
<dbReference type="eggNOG" id="KOG3401">
    <property type="taxonomic scope" value="Eukaryota"/>
</dbReference>
<dbReference type="HOGENOM" id="CLU_093240_0_0_1"/>
<dbReference type="InParanoid" id="P51414"/>
<dbReference type="OMA" id="RRDYKIC"/>
<dbReference type="OrthoDB" id="1098843at2759"/>
<dbReference type="PhylomeDB" id="P51414"/>
<dbReference type="CD-CODE" id="4299E36E">
    <property type="entry name" value="Nucleolus"/>
</dbReference>
<dbReference type="PRO" id="PR:P51414"/>
<dbReference type="Proteomes" id="UP000006548">
    <property type="component" value="Chromosome 3"/>
</dbReference>
<dbReference type="ExpressionAtlas" id="P51414">
    <property type="expression patterns" value="baseline and differential"/>
</dbReference>
<dbReference type="GO" id="GO:0005829">
    <property type="term" value="C:cytosol"/>
    <property type="evidence" value="ECO:0007005"/>
    <property type="project" value="TAIR"/>
</dbReference>
<dbReference type="GO" id="GO:0022625">
    <property type="term" value="C:cytosolic large ribosomal subunit"/>
    <property type="evidence" value="ECO:0007005"/>
    <property type="project" value="TAIR"/>
</dbReference>
<dbReference type="GO" id="GO:0022626">
    <property type="term" value="C:cytosolic ribosome"/>
    <property type="evidence" value="ECO:0007005"/>
    <property type="project" value="TAIR"/>
</dbReference>
<dbReference type="GO" id="GO:0005730">
    <property type="term" value="C:nucleolus"/>
    <property type="evidence" value="ECO:0007005"/>
    <property type="project" value="TAIR"/>
</dbReference>
<dbReference type="GO" id="GO:0005634">
    <property type="term" value="C:nucleus"/>
    <property type="evidence" value="ECO:0007005"/>
    <property type="project" value="TAIR"/>
</dbReference>
<dbReference type="GO" id="GO:0000325">
    <property type="term" value="C:plant-type vacuole"/>
    <property type="evidence" value="ECO:0007005"/>
    <property type="project" value="TAIR"/>
</dbReference>
<dbReference type="GO" id="GO:0003729">
    <property type="term" value="F:mRNA binding"/>
    <property type="evidence" value="ECO:0000314"/>
    <property type="project" value="TAIR"/>
</dbReference>
<dbReference type="GO" id="GO:0003735">
    <property type="term" value="F:structural constituent of ribosome"/>
    <property type="evidence" value="ECO:0000314"/>
    <property type="project" value="CAFA"/>
</dbReference>
<dbReference type="GO" id="GO:0006412">
    <property type="term" value="P:translation"/>
    <property type="evidence" value="ECO:0007669"/>
    <property type="project" value="InterPro"/>
</dbReference>
<dbReference type="CDD" id="cd06089">
    <property type="entry name" value="KOW_RPL26"/>
    <property type="match status" value="1"/>
</dbReference>
<dbReference type="FunFam" id="2.30.30.30:FF:000009">
    <property type="entry name" value="60S ribosomal protein L26"/>
    <property type="match status" value="1"/>
</dbReference>
<dbReference type="Gene3D" id="2.30.30.30">
    <property type="match status" value="1"/>
</dbReference>
<dbReference type="InterPro" id="IPR005824">
    <property type="entry name" value="KOW"/>
</dbReference>
<dbReference type="InterPro" id="IPR014722">
    <property type="entry name" value="Rib_uL2_dom2"/>
</dbReference>
<dbReference type="InterPro" id="IPR005825">
    <property type="entry name" value="Ribosomal_uL24_CS"/>
</dbReference>
<dbReference type="InterPro" id="IPR005756">
    <property type="entry name" value="Ribosomal_uL24_euk/arc"/>
</dbReference>
<dbReference type="InterPro" id="IPR041988">
    <property type="entry name" value="Ribosomal_uL24_KOW"/>
</dbReference>
<dbReference type="InterPro" id="IPR008991">
    <property type="entry name" value="Translation_prot_SH3-like_sf"/>
</dbReference>
<dbReference type="NCBIfam" id="TIGR01080">
    <property type="entry name" value="rplX_A_E"/>
    <property type="match status" value="1"/>
</dbReference>
<dbReference type="PANTHER" id="PTHR11143">
    <property type="entry name" value="60S RIBOSOMAL PROTEIN L26 FAMILY MEMBER"/>
    <property type="match status" value="1"/>
</dbReference>
<dbReference type="Pfam" id="PF00467">
    <property type="entry name" value="KOW"/>
    <property type="match status" value="1"/>
</dbReference>
<dbReference type="Pfam" id="PF16906">
    <property type="entry name" value="Ribosomal_L26"/>
    <property type="match status" value="1"/>
</dbReference>
<dbReference type="SMART" id="SM00739">
    <property type="entry name" value="KOW"/>
    <property type="match status" value="1"/>
</dbReference>
<dbReference type="SUPFAM" id="SSF50104">
    <property type="entry name" value="Translation proteins SH3-like domain"/>
    <property type="match status" value="1"/>
</dbReference>
<dbReference type="PROSITE" id="PS01108">
    <property type="entry name" value="RIBOSOMAL_L24"/>
    <property type="match status" value="1"/>
</dbReference>
<accession>P51414</accession>
<accession>Q9M2W7</accession>
<feature type="chain" id="PRO_0000130797" description="Large ribosomal subunit protein uL24z">
    <location>
        <begin position="1"/>
        <end position="146"/>
    </location>
</feature>
<feature type="region of interest" description="Disordered" evidence="1">
    <location>
        <begin position="1"/>
        <end position="26"/>
    </location>
</feature>
<feature type="region of interest" description="Disordered" evidence="1">
    <location>
        <begin position="121"/>
        <end position="146"/>
    </location>
</feature>
<feature type="compositionally biased region" description="Basic residues" evidence="1">
    <location>
        <begin position="9"/>
        <end position="18"/>
    </location>
</feature>
<feature type="compositionally biased region" description="Basic and acidic residues" evidence="1">
    <location>
        <begin position="121"/>
        <end position="138"/>
    </location>
</feature>
<feature type="sequence conflict" description="In Ref. 4; CAA79203." evidence="3" ref="4">
    <original>M</original>
    <variation>I</variation>
    <location>
        <position position="47"/>
    </location>
</feature>
<feature type="sequence conflict" description="In Ref. 4; CAA79203." evidence="3" ref="4">
    <original>Y</original>
    <variation>S</variation>
    <location>
        <position position="62"/>
    </location>
</feature>
<feature type="sequence conflict" description="In Ref. 4." evidence="3" ref="4">
    <original>TVNV</original>
    <variation>PVTF</variation>
    <location>
        <begin position="93"/>
        <end position="96"/>
    </location>
</feature>
<gene>
    <name type="primary">RPL26A</name>
    <name type="ordered locus">At3g49910</name>
    <name type="ORF">F3A4.4</name>
    <name type="ORF">T16K5.260</name>
</gene>
<protein>
    <recommendedName>
        <fullName evidence="2">Large ribosomal subunit protein uL24z</fullName>
    </recommendedName>
    <alternativeName>
        <fullName>60S ribosomal protein L26-1</fullName>
    </alternativeName>
</protein>
<organism>
    <name type="scientific">Arabidopsis thaliana</name>
    <name type="common">Mouse-ear cress</name>
    <dbReference type="NCBI Taxonomy" id="3702"/>
    <lineage>
        <taxon>Eukaryota</taxon>
        <taxon>Viridiplantae</taxon>
        <taxon>Streptophyta</taxon>
        <taxon>Embryophyta</taxon>
        <taxon>Tracheophyta</taxon>
        <taxon>Spermatophyta</taxon>
        <taxon>Magnoliopsida</taxon>
        <taxon>eudicotyledons</taxon>
        <taxon>Gunneridae</taxon>
        <taxon>Pentapetalae</taxon>
        <taxon>rosids</taxon>
        <taxon>malvids</taxon>
        <taxon>Brassicales</taxon>
        <taxon>Brassicaceae</taxon>
        <taxon>Camelineae</taxon>
        <taxon>Arabidopsis</taxon>
    </lineage>
</organism>
<evidence type="ECO:0000256" key="1">
    <source>
        <dbReference type="SAM" id="MobiDB-lite"/>
    </source>
</evidence>
<evidence type="ECO:0000303" key="2">
    <source>
    </source>
</evidence>
<evidence type="ECO:0000305" key="3"/>
<reference key="1">
    <citation type="journal article" date="2000" name="Nature">
        <title>Sequence and analysis of chromosome 3 of the plant Arabidopsis thaliana.</title>
        <authorList>
            <person name="Salanoubat M."/>
            <person name="Lemcke K."/>
            <person name="Rieger M."/>
            <person name="Ansorge W."/>
            <person name="Unseld M."/>
            <person name="Fartmann B."/>
            <person name="Valle G."/>
            <person name="Bloecker H."/>
            <person name="Perez-Alonso M."/>
            <person name="Obermaier B."/>
            <person name="Delseny M."/>
            <person name="Boutry M."/>
            <person name="Grivell L.A."/>
            <person name="Mache R."/>
            <person name="Puigdomenech P."/>
            <person name="De Simone V."/>
            <person name="Choisne N."/>
            <person name="Artiguenave F."/>
            <person name="Robert C."/>
            <person name="Brottier P."/>
            <person name="Wincker P."/>
            <person name="Cattolico L."/>
            <person name="Weissenbach J."/>
            <person name="Saurin W."/>
            <person name="Quetier F."/>
            <person name="Schaefer M."/>
            <person name="Mueller-Auer S."/>
            <person name="Gabel C."/>
            <person name="Fuchs M."/>
            <person name="Benes V."/>
            <person name="Wurmbach E."/>
            <person name="Drzonek H."/>
            <person name="Erfle H."/>
            <person name="Jordan N."/>
            <person name="Bangert S."/>
            <person name="Wiedelmann R."/>
            <person name="Kranz H."/>
            <person name="Voss H."/>
            <person name="Holland R."/>
            <person name="Brandt P."/>
            <person name="Nyakatura G."/>
            <person name="Vezzi A."/>
            <person name="D'Angelo M."/>
            <person name="Pallavicini A."/>
            <person name="Toppo S."/>
            <person name="Simionati B."/>
            <person name="Conrad A."/>
            <person name="Hornischer K."/>
            <person name="Kauer G."/>
            <person name="Loehnert T.-H."/>
            <person name="Nordsiek G."/>
            <person name="Reichelt J."/>
            <person name="Scharfe M."/>
            <person name="Schoen O."/>
            <person name="Bargues M."/>
            <person name="Terol J."/>
            <person name="Climent J."/>
            <person name="Navarro P."/>
            <person name="Collado C."/>
            <person name="Perez-Perez A."/>
            <person name="Ottenwaelder B."/>
            <person name="Duchemin D."/>
            <person name="Cooke R."/>
            <person name="Laudie M."/>
            <person name="Berger-Llauro C."/>
            <person name="Purnelle B."/>
            <person name="Masuy D."/>
            <person name="de Haan M."/>
            <person name="Maarse A.C."/>
            <person name="Alcaraz J.-P."/>
            <person name="Cottet A."/>
            <person name="Casacuberta E."/>
            <person name="Monfort A."/>
            <person name="Argiriou A."/>
            <person name="Flores M."/>
            <person name="Liguori R."/>
            <person name="Vitale D."/>
            <person name="Mannhaupt G."/>
            <person name="Haase D."/>
            <person name="Schoof H."/>
            <person name="Rudd S."/>
            <person name="Zaccaria P."/>
            <person name="Mewes H.-W."/>
            <person name="Mayer K.F.X."/>
            <person name="Kaul S."/>
            <person name="Town C.D."/>
            <person name="Koo H.L."/>
            <person name="Tallon L.J."/>
            <person name="Jenkins J."/>
            <person name="Rooney T."/>
            <person name="Rizzo M."/>
            <person name="Walts A."/>
            <person name="Utterback T."/>
            <person name="Fujii C.Y."/>
            <person name="Shea T.P."/>
            <person name="Creasy T.H."/>
            <person name="Haas B."/>
            <person name="Maiti R."/>
            <person name="Wu D."/>
            <person name="Peterson J."/>
            <person name="Van Aken S."/>
            <person name="Pai G."/>
            <person name="Militscher J."/>
            <person name="Sellers P."/>
            <person name="Gill J.E."/>
            <person name="Feldblyum T.V."/>
            <person name="Preuss D."/>
            <person name="Lin X."/>
            <person name="Nierman W.C."/>
            <person name="Salzberg S.L."/>
            <person name="White O."/>
            <person name="Venter J.C."/>
            <person name="Fraser C.M."/>
            <person name="Kaneko T."/>
            <person name="Nakamura Y."/>
            <person name="Sato S."/>
            <person name="Kato T."/>
            <person name="Asamizu E."/>
            <person name="Sasamoto S."/>
            <person name="Kimura T."/>
            <person name="Idesawa K."/>
            <person name="Kawashima K."/>
            <person name="Kishida Y."/>
            <person name="Kiyokawa C."/>
            <person name="Kohara M."/>
            <person name="Matsumoto M."/>
            <person name="Matsuno A."/>
            <person name="Muraki A."/>
            <person name="Nakayama S."/>
            <person name="Nakazaki N."/>
            <person name="Shinpo S."/>
            <person name="Takeuchi C."/>
            <person name="Wada T."/>
            <person name="Watanabe A."/>
            <person name="Yamada M."/>
            <person name="Yasuda M."/>
            <person name="Tabata S."/>
        </authorList>
    </citation>
    <scope>NUCLEOTIDE SEQUENCE [LARGE SCALE GENOMIC DNA]</scope>
    <source>
        <strain>cv. Columbia</strain>
    </source>
</reference>
<reference key="2">
    <citation type="journal article" date="2017" name="Plant J.">
        <title>Araport11: a complete reannotation of the Arabidopsis thaliana reference genome.</title>
        <authorList>
            <person name="Cheng C.Y."/>
            <person name="Krishnakumar V."/>
            <person name="Chan A.P."/>
            <person name="Thibaud-Nissen F."/>
            <person name="Schobel S."/>
            <person name="Town C.D."/>
        </authorList>
    </citation>
    <scope>GENOME REANNOTATION</scope>
    <source>
        <strain>cv. Columbia</strain>
    </source>
</reference>
<reference key="3">
    <citation type="journal article" date="2003" name="Science">
        <title>Empirical analysis of transcriptional activity in the Arabidopsis genome.</title>
        <authorList>
            <person name="Yamada K."/>
            <person name="Lim J."/>
            <person name="Dale J.M."/>
            <person name="Chen H."/>
            <person name="Shinn P."/>
            <person name="Palm C.J."/>
            <person name="Southwick A.M."/>
            <person name="Wu H.C."/>
            <person name="Kim C.J."/>
            <person name="Nguyen M."/>
            <person name="Pham P.K."/>
            <person name="Cheuk R.F."/>
            <person name="Karlin-Newmann G."/>
            <person name="Liu S.X."/>
            <person name="Lam B."/>
            <person name="Sakano H."/>
            <person name="Wu T."/>
            <person name="Yu G."/>
            <person name="Miranda M."/>
            <person name="Quach H.L."/>
            <person name="Tripp M."/>
            <person name="Chang C.H."/>
            <person name="Lee J.M."/>
            <person name="Toriumi M.J."/>
            <person name="Chan M.M."/>
            <person name="Tang C.C."/>
            <person name="Onodera C.S."/>
            <person name="Deng J.M."/>
            <person name="Akiyama K."/>
            <person name="Ansari Y."/>
            <person name="Arakawa T."/>
            <person name="Banh J."/>
            <person name="Banno F."/>
            <person name="Bowser L."/>
            <person name="Brooks S.Y."/>
            <person name="Carninci P."/>
            <person name="Chao Q."/>
            <person name="Choy N."/>
            <person name="Enju A."/>
            <person name="Goldsmith A.D."/>
            <person name="Gurjal M."/>
            <person name="Hansen N.F."/>
            <person name="Hayashizaki Y."/>
            <person name="Johnson-Hopson C."/>
            <person name="Hsuan V.W."/>
            <person name="Iida K."/>
            <person name="Karnes M."/>
            <person name="Khan S."/>
            <person name="Koesema E."/>
            <person name="Ishida J."/>
            <person name="Jiang P.X."/>
            <person name="Jones T."/>
            <person name="Kawai J."/>
            <person name="Kamiya A."/>
            <person name="Meyers C."/>
            <person name="Nakajima M."/>
            <person name="Narusaka M."/>
            <person name="Seki M."/>
            <person name="Sakurai T."/>
            <person name="Satou M."/>
            <person name="Tamse R."/>
            <person name="Vaysberg M."/>
            <person name="Wallender E.K."/>
            <person name="Wong C."/>
            <person name="Yamamura Y."/>
            <person name="Yuan S."/>
            <person name="Shinozaki K."/>
            <person name="Davis R.W."/>
            <person name="Theologis A."/>
            <person name="Ecker J.R."/>
        </authorList>
    </citation>
    <scope>NUCLEOTIDE SEQUENCE [LARGE SCALE MRNA]</scope>
    <source>
        <strain>cv. Columbia</strain>
    </source>
</reference>
<reference key="4">
    <citation type="journal article" date="1993" name="Plant J.">
        <title>An inventory of 1152 expressed sequence tags obtained by partial sequencing of cDNAs from Arabidopsis thaliana.</title>
        <authorList>
            <person name="Hoefte H."/>
            <person name="Desprez T."/>
            <person name="Amselem J."/>
            <person name="Chiapello H."/>
            <person name="Rouze P."/>
            <person name="Caboche M."/>
            <person name="Moisan A."/>
            <person name="Jourjon M.-F."/>
            <person name="Charpenteau J.-L."/>
            <person name="Berthomieu P."/>
            <person name="Guerrier D."/>
            <person name="Giraudat J."/>
            <person name="Quigley F."/>
            <person name="Thomas F."/>
            <person name="Yu D.-Y."/>
            <person name="Mache R."/>
            <person name="Raynal M."/>
            <person name="Cooke R."/>
            <person name="Grellet F."/>
            <person name="Delseny M."/>
            <person name="Parmentier Y."/>
            <person name="de Marcillac G."/>
            <person name="Gigot C."/>
            <person name="Fleck J."/>
            <person name="Philipps G."/>
            <person name="Axelos M."/>
            <person name="Bardet C."/>
            <person name="Tremousaygue D."/>
            <person name="Lescure B."/>
        </authorList>
    </citation>
    <scope>NUCLEOTIDE SEQUENCE [LARGE SCALE MRNA] OF 12-98</scope>
    <source>
        <strain>cv. Columbia</strain>
    </source>
</reference>
<reference key="5">
    <citation type="journal article" date="2001" name="Plant Physiol.">
        <title>The organization of cytoplasmic ribosomal protein genes in the Arabidopsis genome.</title>
        <authorList>
            <person name="Barakat A."/>
            <person name="Szick-Miranda K."/>
            <person name="Chang I.-F."/>
            <person name="Guyot R."/>
            <person name="Blanc G."/>
            <person name="Cooke R."/>
            <person name="Delseny M."/>
            <person name="Bailey-Serres J."/>
        </authorList>
    </citation>
    <scope>GENE FAMILY ORGANIZATION</scope>
    <scope>NOMENCLATURE</scope>
</reference>
<reference key="6">
    <citation type="journal article" date="2023" name="Plant Cell">
        <title>An updated nomenclature for plant ribosomal protein genes.</title>
        <authorList>
            <person name="Scarpin M.R."/>
            <person name="Busche M."/>
            <person name="Martinez R.E."/>
            <person name="Harper L.C."/>
            <person name="Reiser L."/>
            <person name="Szakonyi D."/>
            <person name="Merchante C."/>
            <person name="Lan T."/>
            <person name="Xiong W."/>
            <person name="Mo B."/>
            <person name="Tang G."/>
            <person name="Chen X."/>
            <person name="Bailey-Serres J."/>
            <person name="Browning K.S."/>
            <person name="Brunkard J.O."/>
        </authorList>
    </citation>
    <scope>NOMENCLATURE</scope>
</reference>
<sequence length="146" mass="16945">MKYNPRVTSSRRKNRKAHFTASSSERRVIMSSPLSTDLRQKYNVRSMPIRKDDEVQIVRGTYKGREGKVVQVYRRKWVIHIERITREKVNGTTVNVGIQPSKVVITKLRLDKDRKSLLERKAKGRAAADKEKGTKFTSEDVMQNVD</sequence>
<keyword id="KW-1185">Reference proteome</keyword>
<keyword id="KW-0687">Ribonucleoprotein</keyword>
<keyword id="KW-0689">Ribosomal protein</keyword>
<proteinExistence type="evidence at transcript level"/>